<dbReference type="EC" id="1.6.5.-" evidence="1"/>
<dbReference type="EC" id="1.7.1.17" evidence="1"/>
<dbReference type="EMBL" id="CP000116">
    <property type="protein sequence ID" value="AAZ97070.1"/>
    <property type="status" value="ALT_INIT"/>
    <property type="molecule type" value="Genomic_DNA"/>
</dbReference>
<dbReference type="RefSeq" id="WP_011311629.1">
    <property type="nucleotide sequence ID" value="NC_007404.1"/>
</dbReference>
<dbReference type="SMR" id="Q3SJT0"/>
<dbReference type="STRING" id="292415.Tbd_1117"/>
<dbReference type="KEGG" id="tbd:Tbd_1117"/>
<dbReference type="eggNOG" id="COG1182">
    <property type="taxonomic scope" value="Bacteria"/>
</dbReference>
<dbReference type="HOGENOM" id="CLU_088964_0_0_4"/>
<dbReference type="OrthoDB" id="9787136at2"/>
<dbReference type="Proteomes" id="UP000008291">
    <property type="component" value="Chromosome"/>
</dbReference>
<dbReference type="GO" id="GO:0009055">
    <property type="term" value="F:electron transfer activity"/>
    <property type="evidence" value="ECO:0007669"/>
    <property type="project" value="UniProtKB-UniRule"/>
</dbReference>
<dbReference type="GO" id="GO:0010181">
    <property type="term" value="F:FMN binding"/>
    <property type="evidence" value="ECO:0007669"/>
    <property type="project" value="UniProtKB-UniRule"/>
</dbReference>
<dbReference type="GO" id="GO:0016652">
    <property type="term" value="F:oxidoreductase activity, acting on NAD(P)H as acceptor"/>
    <property type="evidence" value="ECO:0007669"/>
    <property type="project" value="UniProtKB-UniRule"/>
</dbReference>
<dbReference type="GO" id="GO:0016655">
    <property type="term" value="F:oxidoreductase activity, acting on NAD(P)H, quinone or similar compound as acceptor"/>
    <property type="evidence" value="ECO:0007669"/>
    <property type="project" value="InterPro"/>
</dbReference>
<dbReference type="Gene3D" id="3.40.50.360">
    <property type="match status" value="1"/>
</dbReference>
<dbReference type="HAMAP" id="MF_01216">
    <property type="entry name" value="Azoreductase_type1"/>
    <property type="match status" value="1"/>
</dbReference>
<dbReference type="InterPro" id="IPR003680">
    <property type="entry name" value="Flavodoxin_fold"/>
</dbReference>
<dbReference type="InterPro" id="IPR029039">
    <property type="entry name" value="Flavoprotein-like_sf"/>
</dbReference>
<dbReference type="InterPro" id="IPR050104">
    <property type="entry name" value="FMN-dep_NADH:Q_OxRdtase_AzoR1"/>
</dbReference>
<dbReference type="InterPro" id="IPR023048">
    <property type="entry name" value="NADH:quinone_OxRdtase_FMN_depd"/>
</dbReference>
<dbReference type="PANTHER" id="PTHR43741">
    <property type="entry name" value="FMN-DEPENDENT NADH-AZOREDUCTASE 1"/>
    <property type="match status" value="1"/>
</dbReference>
<dbReference type="PANTHER" id="PTHR43741:SF2">
    <property type="entry name" value="FMN-DEPENDENT NADH:QUINONE OXIDOREDUCTASE"/>
    <property type="match status" value="1"/>
</dbReference>
<dbReference type="Pfam" id="PF02525">
    <property type="entry name" value="Flavodoxin_2"/>
    <property type="match status" value="1"/>
</dbReference>
<dbReference type="SUPFAM" id="SSF52218">
    <property type="entry name" value="Flavoproteins"/>
    <property type="match status" value="1"/>
</dbReference>
<reference key="1">
    <citation type="journal article" date="2006" name="J. Bacteriol.">
        <title>The genome sequence of the obligately chemolithoautotrophic, facultatively anaerobic bacterium Thiobacillus denitrificans.</title>
        <authorList>
            <person name="Beller H.R."/>
            <person name="Chain P.S."/>
            <person name="Letain T.E."/>
            <person name="Chakicherla A."/>
            <person name="Larimer F.W."/>
            <person name="Richardson P.M."/>
            <person name="Coleman M.A."/>
            <person name="Wood A.P."/>
            <person name="Kelly D.P."/>
        </authorList>
    </citation>
    <scope>NUCLEOTIDE SEQUENCE [LARGE SCALE GENOMIC DNA]</scope>
    <source>
        <strain>ATCC 25259 / T1</strain>
    </source>
</reference>
<organism>
    <name type="scientific">Thiobacillus denitrificans (strain ATCC 25259 / T1)</name>
    <dbReference type="NCBI Taxonomy" id="292415"/>
    <lineage>
        <taxon>Bacteria</taxon>
        <taxon>Pseudomonadati</taxon>
        <taxon>Pseudomonadota</taxon>
        <taxon>Betaproteobacteria</taxon>
        <taxon>Nitrosomonadales</taxon>
        <taxon>Thiobacillaceae</taxon>
        <taxon>Thiobacillus</taxon>
    </lineage>
</organism>
<comment type="function">
    <text evidence="1">Quinone reductase that provides resistance to thiol-specific stress caused by electrophilic quinones.</text>
</comment>
<comment type="function">
    <text evidence="1">Also exhibits azoreductase activity. Catalyzes the reductive cleavage of the azo bond in aromatic azo compounds to the corresponding amines.</text>
</comment>
<comment type="catalytic activity">
    <reaction evidence="1">
        <text>2 a quinone + NADH + H(+) = 2 a 1,4-benzosemiquinone + NAD(+)</text>
        <dbReference type="Rhea" id="RHEA:65952"/>
        <dbReference type="ChEBI" id="CHEBI:15378"/>
        <dbReference type="ChEBI" id="CHEBI:57540"/>
        <dbReference type="ChEBI" id="CHEBI:57945"/>
        <dbReference type="ChEBI" id="CHEBI:132124"/>
        <dbReference type="ChEBI" id="CHEBI:134225"/>
    </reaction>
</comment>
<comment type="catalytic activity">
    <reaction evidence="1">
        <text>N,N-dimethyl-1,4-phenylenediamine + anthranilate + 2 NAD(+) = 2-(4-dimethylaminophenyl)diazenylbenzoate + 2 NADH + 2 H(+)</text>
        <dbReference type="Rhea" id="RHEA:55872"/>
        <dbReference type="ChEBI" id="CHEBI:15378"/>
        <dbReference type="ChEBI" id="CHEBI:15783"/>
        <dbReference type="ChEBI" id="CHEBI:16567"/>
        <dbReference type="ChEBI" id="CHEBI:57540"/>
        <dbReference type="ChEBI" id="CHEBI:57945"/>
        <dbReference type="ChEBI" id="CHEBI:71579"/>
        <dbReference type="EC" id="1.7.1.17"/>
    </reaction>
</comment>
<comment type="cofactor">
    <cofactor evidence="1">
        <name>FMN</name>
        <dbReference type="ChEBI" id="CHEBI:58210"/>
    </cofactor>
    <text evidence="1">Binds 1 FMN per subunit.</text>
</comment>
<comment type="subunit">
    <text evidence="1">Homodimer.</text>
</comment>
<comment type="similarity">
    <text evidence="1">Belongs to the azoreductase type 1 family.</text>
</comment>
<comment type="sequence caution" evidence="2">
    <conflict type="erroneous initiation">
        <sequence resource="EMBL-CDS" id="AAZ97070"/>
    </conflict>
</comment>
<gene>
    <name evidence="1" type="primary">azoR</name>
    <name type="ordered locus">Tbd_1117</name>
</gene>
<evidence type="ECO:0000255" key="1">
    <source>
        <dbReference type="HAMAP-Rule" id="MF_01216"/>
    </source>
</evidence>
<evidence type="ECO:0000305" key="2"/>
<proteinExistence type="inferred from homology"/>
<accession>Q3SJT0</accession>
<feature type="chain" id="PRO_0000245982" description="FMN-dependent NADH:quinone oxidoreductase">
    <location>
        <begin position="1"/>
        <end position="204"/>
    </location>
</feature>
<feature type="binding site" evidence="1">
    <location>
        <position position="9"/>
    </location>
    <ligand>
        <name>FMN</name>
        <dbReference type="ChEBI" id="CHEBI:58210"/>
    </ligand>
</feature>
<keyword id="KW-0285">Flavoprotein</keyword>
<keyword id="KW-0288">FMN</keyword>
<keyword id="KW-0520">NAD</keyword>
<keyword id="KW-0560">Oxidoreductase</keyword>
<keyword id="KW-1185">Reference proteome</keyword>
<name>AZOR_THIDA</name>
<protein>
    <recommendedName>
        <fullName evidence="1">FMN-dependent NADH:quinone oxidoreductase</fullName>
        <ecNumber evidence="1">1.6.5.-</ecNumber>
    </recommendedName>
    <alternativeName>
        <fullName evidence="1">Azo-dye reductase</fullName>
    </alternativeName>
    <alternativeName>
        <fullName evidence="1">FMN-dependent NADH-azo compound oxidoreductase</fullName>
    </alternativeName>
    <alternativeName>
        <fullName evidence="1">FMN-dependent NADH-azoreductase</fullName>
        <ecNumber evidence="1">1.7.1.17</ecNumber>
    </alternativeName>
</protein>
<sequence>MRVLRVDASARVDDSVTRRLADLMLEILGERVPDLSVVRREAAGMPFVDDAWVGANSTDPEARDSAQRWALAKSDELVSEVMAADVLVIATPIYNFGVPASLKAWVDQVARARLTFRDTEYGPEGLLTGKKAYVLVASGGTEVGSDIDFATPWLEFVLGFLGITDVEVIAADRGMLRGDSARQNAAEHVADVLERDWPALAEAS</sequence>